<accession>Q6N1V9</accession>
<feature type="chain" id="PRO_0000224315" description="Adenylosuccinate synthetase">
    <location>
        <begin position="1"/>
        <end position="430"/>
    </location>
</feature>
<feature type="active site" description="Proton acceptor" evidence="1">
    <location>
        <position position="13"/>
    </location>
</feature>
<feature type="active site" description="Proton donor" evidence="1">
    <location>
        <position position="41"/>
    </location>
</feature>
<feature type="binding site" evidence="1">
    <location>
        <begin position="12"/>
        <end position="18"/>
    </location>
    <ligand>
        <name>GTP</name>
        <dbReference type="ChEBI" id="CHEBI:37565"/>
    </ligand>
</feature>
<feature type="binding site" description="in other chain" evidence="1">
    <location>
        <begin position="13"/>
        <end position="16"/>
    </location>
    <ligand>
        <name>IMP</name>
        <dbReference type="ChEBI" id="CHEBI:58053"/>
        <note>ligand shared between dimeric partners</note>
    </ligand>
</feature>
<feature type="binding site" evidence="1">
    <location>
        <position position="13"/>
    </location>
    <ligand>
        <name>Mg(2+)</name>
        <dbReference type="ChEBI" id="CHEBI:18420"/>
    </ligand>
</feature>
<feature type="binding site" description="in other chain" evidence="1">
    <location>
        <begin position="38"/>
        <end position="41"/>
    </location>
    <ligand>
        <name>IMP</name>
        <dbReference type="ChEBI" id="CHEBI:58053"/>
        <note>ligand shared between dimeric partners</note>
    </ligand>
</feature>
<feature type="binding site" evidence="1">
    <location>
        <begin position="40"/>
        <end position="42"/>
    </location>
    <ligand>
        <name>GTP</name>
        <dbReference type="ChEBI" id="CHEBI:37565"/>
    </ligand>
</feature>
<feature type="binding site" evidence="1">
    <location>
        <position position="40"/>
    </location>
    <ligand>
        <name>Mg(2+)</name>
        <dbReference type="ChEBI" id="CHEBI:18420"/>
    </ligand>
</feature>
<feature type="binding site" description="in other chain" evidence="1">
    <location>
        <position position="130"/>
    </location>
    <ligand>
        <name>IMP</name>
        <dbReference type="ChEBI" id="CHEBI:58053"/>
        <note>ligand shared between dimeric partners</note>
    </ligand>
</feature>
<feature type="binding site" evidence="1">
    <location>
        <position position="144"/>
    </location>
    <ligand>
        <name>IMP</name>
        <dbReference type="ChEBI" id="CHEBI:58053"/>
        <note>ligand shared between dimeric partners</note>
    </ligand>
</feature>
<feature type="binding site" description="in other chain" evidence="1">
    <location>
        <position position="224"/>
    </location>
    <ligand>
        <name>IMP</name>
        <dbReference type="ChEBI" id="CHEBI:58053"/>
        <note>ligand shared between dimeric partners</note>
    </ligand>
</feature>
<feature type="binding site" description="in other chain" evidence="1">
    <location>
        <position position="239"/>
    </location>
    <ligand>
        <name>IMP</name>
        <dbReference type="ChEBI" id="CHEBI:58053"/>
        <note>ligand shared between dimeric partners</note>
    </ligand>
</feature>
<feature type="binding site" evidence="1">
    <location>
        <begin position="299"/>
        <end position="305"/>
    </location>
    <ligand>
        <name>substrate</name>
    </ligand>
</feature>
<feature type="binding site" description="in other chain" evidence="1">
    <location>
        <position position="303"/>
    </location>
    <ligand>
        <name>IMP</name>
        <dbReference type="ChEBI" id="CHEBI:58053"/>
        <note>ligand shared between dimeric partners</note>
    </ligand>
</feature>
<feature type="binding site" evidence="1">
    <location>
        <position position="305"/>
    </location>
    <ligand>
        <name>GTP</name>
        <dbReference type="ChEBI" id="CHEBI:37565"/>
    </ligand>
</feature>
<feature type="binding site" evidence="1">
    <location>
        <begin position="331"/>
        <end position="333"/>
    </location>
    <ligand>
        <name>GTP</name>
        <dbReference type="ChEBI" id="CHEBI:37565"/>
    </ligand>
</feature>
<feature type="binding site" evidence="1">
    <location>
        <begin position="413"/>
        <end position="415"/>
    </location>
    <ligand>
        <name>GTP</name>
        <dbReference type="ChEBI" id="CHEBI:37565"/>
    </ligand>
</feature>
<evidence type="ECO:0000255" key="1">
    <source>
        <dbReference type="HAMAP-Rule" id="MF_00011"/>
    </source>
</evidence>
<organism>
    <name type="scientific">Rhodopseudomonas palustris (strain ATCC BAA-98 / CGA009)</name>
    <dbReference type="NCBI Taxonomy" id="258594"/>
    <lineage>
        <taxon>Bacteria</taxon>
        <taxon>Pseudomonadati</taxon>
        <taxon>Pseudomonadota</taxon>
        <taxon>Alphaproteobacteria</taxon>
        <taxon>Hyphomicrobiales</taxon>
        <taxon>Nitrobacteraceae</taxon>
        <taxon>Rhodopseudomonas</taxon>
    </lineage>
</organism>
<protein>
    <recommendedName>
        <fullName evidence="1">Adenylosuccinate synthetase</fullName>
        <shortName evidence="1">AMPSase</shortName>
        <shortName evidence="1">AdSS</shortName>
        <ecNumber evidence="1">6.3.4.4</ecNumber>
    </recommendedName>
    <alternativeName>
        <fullName evidence="1">IMP--aspartate ligase</fullName>
    </alternativeName>
</protein>
<dbReference type="EC" id="6.3.4.4" evidence="1"/>
<dbReference type="EMBL" id="BX572606">
    <property type="protein sequence ID" value="CAE29736.1"/>
    <property type="molecule type" value="Genomic_DNA"/>
</dbReference>
<dbReference type="RefSeq" id="WP_011159829.1">
    <property type="nucleotide sequence ID" value="NZ_CP116810.1"/>
</dbReference>
<dbReference type="SMR" id="Q6N1V9"/>
<dbReference type="STRING" id="258594.RPA4295"/>
<dbReference type="GeneID" id="66895424"/>
<dbReference type="eggNOG" id="COG0104">
    <property type="taxonomic scope" value="Bacteria"/>
</dbReference>
<dbReference type="HOGENOM" id="CLU_029848_0_0_5"/>
<dbReference type="PhylomeDB" id="Q6N1V9"/>
<dbReference type="UniPathway" id="UPA00075">
    <property type="reaction ID" value="UER00335"/>
</dbReference>
<dbReference type="GO" id="GO:0005737">
    <property type="term" value="C:cytoplasm"/>
    <property type="evidence" value="ECO:0007669"/>
    <property type="project" value="UniProtKB-SubCell"/>
</dbReference>
<dbReference type="GO" id="GO:0004019">
    <property type="term" value="F:adenylosuccinate synthase activity"/>
    <property type="evidence" value="ECO:0007669"/>
    <property type="project" value="UniProtKB-UniRule"/>
</dbReference>
<dbReference type="GO" id="GO:0005525">
    <property type="term" value="F:GTP binding"/>
    <property type="evidence" value="ECO:0007669"/>
    <property type="project" value="UniProtKB-UniRule"/>
</dbReference>
<dbReference type="GO" id="GO:0000287">
    <property type="term" value="F:magnesium ion binding"/>
    <property type="evidence" value="ECO:0007669"/>
    <property type="project" value="UniProtKB-UniRule"/>
</dbReference>
<dbReference type="GO" id="GO:0044208">
    <property type="term" value="P:'de novo' AMP biosynthetic process"/>
    <property type="evidence" value="ECO:0007669"/>
    <property type="project" value="UniProtKB-UniRule"/>
</dbReference>
<dbReference type="GO" id="GO:0046040">
    <property type="term" value="P:IMP metabolic process"/>
    <property type="evidence" value="ECO:0007669"/>
    <property type="project" value="TreeGrafter"/>
</dbReference>
<dbReference type="CDD" id="cd03108">
    <property type="entry name" value="AdSS"/>
    <property type="match status" value="1"/>
</dbReference>
<dbReference type="FunFam" id="1.10.300.10:FF:000001">
    <property type="entry name" value="Adenylosuccinate synthetase"/>
    <property type="match status" value="1"/>
</dbReference>
<dbReference type="FunFam" id="3.90.170.10:FF:000001">
    <property type="entry name" value="Adenylosuccinate synthetase"/>
    <property type="match status" value="1"/>
</dbReference>
<dbReference type="Gene3D" id="3.40.440.10">
    <property type="entry name" value="Adenylosuccinate Synthetase, subunit A, domain 1"/>
    <property type="match status" value="1"/>
</dbReference>
<dbReference type="Gene3D" id="1.10.300.10">
    <property type="entry name" value="Adenylosuccinate Synthetase, subunit A, domain 2"/>
    <property type="match status" value="1"/>
</dbReference>
<dbReference type="Gene3D" id="3.90.170.10">
    <property type="entry name" value="Adenylosuccinate Synthetase, subunit A, domain 3"/>
    <property type="match status" value="1"/>
</dbReference>
<dbReference type="HAMAP" id="MF_00011">
    <property type="entry name" value="Adenylosucc_synth"/>
    <property type="match status" value="1"/>
</dbReference>
<dbReference type="InterPro" id="IPR018220">
    <property type="entry name" value="Adenylosuccin_syn_GTP-bd"/>
</dbReference>
<dbReference type="InterPro" id="IPR033128">
    <property type="entry name" value="Adenylosuccin_syn_Lys_AS"/>
</dbReference>
<dbReference type="InterPro" id="IPR042109">
    <property type="entry name" value="Adenylosuccinate_synth_dom1"/>
</dbReference>
<dbReference type="InterPro" id="IPR042110">
    <property type="entry name" value="Adenylosuccinate_synth_dom2"/>
</dbReference>
<dbReference type="InterPro" id="IPR042111">
    <property type="entry name" value="Adenylosuccinate_synth_dom3"/>
</dbReference>
<dbReference type="InterPro" id="IPR001114">
    <property type="entry name" value="Adenylosuccinate_synthetase"/>
</dbReference>
<dbReference type="InterPro" id="IPR027417">
    <property type="entry name" value="P-loop_NTPase"/>
</dbReference>
<dbReference type="NCBIfam" id="NF002223">
    <property type="entry name" value="PRK01117.1"/>
    <property type="match status" value="1"/>
</dbReference>
<dbReference type="NCBIfam" id="TIGR00184">
    <property type="entry name" value="purA"/>
    <property type="match status" value="1"/>
</dbReference>
<dbReference type="PANTHER" id="PTHR11846">
    <property type="entry name" value="ADENYLOSUCCINATE SYNTHETASE"/>
    <property type="match status" value="1"/>
</dbReference>
<dbReference type="PANTHER" id="PTHR11846:SF0">
    <property type="entry name" value="ADENYLOSUCCINATE SYNTHETASE"/>
    <property type="match status" value="1"/>
</dbReference>
<dbReference type="Pfam" id="PF00709">
    <property type="entry name" value="Adenylsucc_synt"/>
    <property type="match status" value="1"/>
</dbReference>
<dbReference type="SMART" id="SM00788">
    <property type="entry name" value="Adenylsucc_synt"/>
    <property type="match status" value="1"/>
</dbReference>
<dbReference type="SUPFAM" id="SSF52540">
    <property type="entry name" value="P-loop containing nucleoside triphosphate hydrolases"/>
    <property type="match status" value="1"/>
</dbReference>
<dbReference type="PROSITE" id="PS01266">
    <property type="entry name" value="ADENYLOSUCCIN_SYN_1"/>
    <property type="match status" value="1"/>
</dbReference>
<dbReference type="PROSITE" id="PS00513">
    <property type="entry name" value="ADENYLOSUCCIN_SYN_2"/>
    <property type="match status" value="1"/>
</dbReference>
<comment type="function">
    <text evidence="1">Plays an important role in the de novo pathway of purine nucleotide biosynthesis. Catalyzes the first committed step in the biosynthesis of AMP from IMP.</text>
</comment>
<comment type="catalytic activity">
    <reaction evidence="1">
        <text>IMP + L-aspartate + GTP = N(6)-(1,2-dicarboxyethyl)-AMP + GDP + phosphate + 2 H(+)</text>
        <dbReference type="Rhea" id="RHEA:15753"/>
        <dbReference type="ChEBI" id="CHEBI:15378"/>
        <dbReference type="ChEBI" id="CHEBI:29991"/>
        <dbReference type="ChEBI" id="CHEBI:37565"/>
        <dbReference type="ChEBI" id="CHEBI:43474"/>
        <dbReference type="ChEBI" id="CHEBI:57567"/>
        <dbReference type="ChEBI" id="CHEBI:58053"/>
        <dbReference type="ChEBI" id="CHEBI:58189"/>
        <dbReference type="EC" id="6.3.4.4"/>
    </reaction>
</comment>
<comment type="cofactor">
    <cofactor evidence="1">
        <name>Mg(2+)</name>
        <dbReference type="ChEBI" id="CHEBI:18420"/>
    </cofactor>
    <text evidence="1">Binds 1 Mg(2+) ion per subunit.</text>
</comment>
<comment type="pathway">
    <text evidence="1">Purine metabolism; AMP biosynthesis via de novo pathway; AMP from IMP: step 1/2.</text>
</comment>
<comment type="subunit">
    <text evidence="1">Homodimer.</text>
</comment>
<comment type="subcellular location">
    <subcellularLocation>
        <location evidence="1">Cytoplasm</location>
    </subcellularLocation>
</comment>
<comment type="similarity">
    <text evidence="1">Belongs to the adenylosuccinate synthetase family.</text>
</comment>
<name>PURA_RHOPA</name>
<proteinExistence type="inferred from homology"/>
<gene>
    <name evidence="1" type="primary">purA</name>
    <name type="ordered locus">RPA4295</name>
</gene>
<keyword id="KW-0963">Cytoplasm</keyword>
<keyword id="KW-0342">GTP-binding</keyword>
<keyword id="KW-0436">Ligase</keyword>
<keyword id="KW-0460">Magnesium</keyword>
<keyword id="KW-0479">Metal-binding</keyword>
<keyword id="KW-0547">Nucleotide-binding</keyword>
<keyword id="KW-0658">Purine biosynthesis</keyword>
<reference key="1">
    <citation type="journal article" date="2004" name="Nat. Biotechnol.">
        <title>Complete genome sequence of the metabolically versatile photosynthetic bacterium Rhodopseudomonas palustris.</title>
        <authorList>
            <person name="Larimer F.W."/>
            <person name="Chain P."/>
            <person name="Hauser L."/>
            <person name="Lamerdin J.E."/>
            <person name="Malfatti S."/>
            <person name="Do L."/>
            <person name="Land M.L."/>
            <person name="Pelletier D.A."/>
            <person name="Beatty J.T."/>
            <person name="Lang A.S."/>
            <person name="Tabita F.R."/>
            <person name="Gibson J.L."/>
            <person name="Hanson T.E."/>
            <person name="Bobst C."/>
            <person name="Torres y Torres J.L."/>
            <person name="Peres C."/>
            <person name="Harrison F.H."/>
            <person name="Gibson J."/>
            <person name="Harwood C.S."/>
        </authorList>
    </citation>
    <scope>NUCLEOTIDE SEQUENCE [LARGE SCALE GENOMIC DNA]</scope>
    <source>
        <strain>ATCC BAA-98 / CGA009</strain>
    </source>
</reference>
<sequence>MANVVVVGAQWGDEGKGKIVDWLSEQADIVVRFQGGHNAGHTLVINGQTYKLALLPSGVLRPSKLAVIGNGVVFDPQAFLDEVKKLQGQGVAISPENLRIAENVTLILPLHRELDATRENAAKAGAIGTTQRGIGPAYEDKVGRRAIRLMDLADLDTLPTKIERLLAHHNALRRGLDQPEIDAGQILADLSAMAPHLLPYAESVWRLLDIKRREGKRILFEGAQGALLDVDHGTYPYVTSSNTVAAQAATGTGMGPGAVGYVLGICKAYTTRVGAGPFPTELTNEIGEEIGRRGKEFGVNTGRKRRCGWFDAVLVRQTVRTCGIHGLALTKLDILDGFDSVEVCVGYKLDGKEIDYLPAGEGAQARVEPIYETIEGWKEPTANARSWAELPAQAIKYVRRIEELVGCPVALLSTSPEREDTILVQNPFEA</sequence>